<accession>A3DEX5</accession>
<name>SIGI5_ACET2</name>
<reference key="1">
    <citation type="submission" date="2007-02" db="EMBL/GenBank/DDBJ databases">
        <title>Complete sequence of Clostridium thermocellum ATCC 27405.</title>
        <authorList>
            <consortium name="US DOE Joint Genome Institute"/>
            <person name="Copeland A."/>
            <person name="Lucas S."/>
            <person name="Lapidus A."/>
            <person name="Barry K."/>
            <person name="Detter J.C."/>
            <person name="Glavina del Rio T."/>
            <person name="Hammon N."/>
            <person name="Israni S."/>
            <person name="Dalin E."/>
            <person name="Tice H."/>
            <person name="Pitluck S."/>
            <person name="Chertkov O."/>
            <person name="Brettin T."/>
            <person name="Bruce D."/>
            <person name="Han C."/>
            <person name="Tapia R."/>
            <person name="Gilna P."/>
            <person name="Schmutz J."/>
            <person name="Larimer F."/>
            <person name="Land M."/>
            <person name="Hauser L."/>
            <person name="Kyrpides N."/>
            <person name="Mikhailova N."/>
            <person name="Wu J.H.D."/>
            <person name="Newcomb M."/>
            <person name="Richardson P."/>
        </authorList>
    </citation>
    <scope>NUCLEOTIDE SEQUENCE [LARGE SCALE GENOMIC DNA]</scope>
    <source>
        <strain>ATCC 27405 / DSM 1237 / JCM 9322 / NBRC 103400 / NCIMB 10682 / NRRL B-4536 / VPI 7372</strain>
    </source>
</reference>
<reference key="2">
    <citation type="journal article" date="2010" name="FEMS Microbiol. Lett.">
        <title>The unique set of putative membrane-associated anti-sigma factors in Clostridium thermocellum suggests a novel extracellular carbohydrate-sensing mechanism involved in gene regulation.</title>
        <authorList>
            <person name="Kahel-Raifer H."/>
            <person name="Jindou S."/>
            <person name="Bahari L."/>
            <person name="Nataf Y."/>
            <person name="Shoham Y."/>
            <person name="Bayer E.A."/>
            <person name="Borovok I."/>
            <person name="Lamed R."/>
        </authorList>
    </citation>
    <scope>NOMENCLATURE</scope>
    <source>
        <strain>ATCC 27405 / DSM 1237 / JCM 9322 / NBRC 103400 / NCIMB 10682 / NRRL B-4536 / VPI 7372</strain>
    </source>
</reference>
<reference key="3">
    <citation type="journal article" date="2010" name="Proc. Natl. Acad. Sci. U.S.A.">
        <title>Clostridium thermocellum cellulosomal genes are regulated by extracytoplasmic polysaccharides via alternative sigma factors.</title>
        <authorList>
            <person name="Nataf Y."/>
            <person name="Bahari L."/>
            <person name="Kahel-Raifer H."/>
            <person name="Borovok I."/>
            <person name="Lamed R."/>
            <person name="Bayer E.A."/>
            <person name="Sonenshein A.L."/>
            <person name="Shoham Y."/>
        </authorList>
    </citation>
    <scope>FUNCTION</scope>
    <scope>INDUCTION</scope>
</reference>
<protein>
    <recommendedName>
        <fullName evidence="5">RNA polymerase sigma factor SigI5</fullName>
    </recommendedName>
</protein>
<proteinExistence type="evidence at transcript level"/>
<feature type="chain" id="PRO_0000436519" description="RNA polymerase sigma factor SigI5">
    <location>
        <begin position="1"/>
        <end position="245"/>
    </location>
</feature>
<feature type="DNA-binding region" description="H-T-H motif" evidence="2">
    <location>
        <begin position="202"/>
        <end position="221"/>
    </location>
</feature>
<feature type="short sequence motif" description="Polymerase core binding" evidence="2">
    <location>
        <begin position="60"/>
        <end position="73"/>
    </location>
</feature>
<evidence type="ECO:0000250" key="1">
    <source>
        <dbReference type="UniProtKB" id="A3DBH0"/>
    </source>
</evidence>
<evidence type="ECO:0000255" key="2">
    <source>
        <dbReference type="HAMAP-Rule" id="MF_02064"/>
    </source>
</evidence>
<evidence type="ECO:0000269" key="3">
    <source>
    </source>
</evidence>
<evidence type="ECO:0000303" key="4">
    <source>
    </source>
</evidence>
<evidence type="ECO:0000305" key="5"/>
<evidence type="ECO:0000305" key="6">
    <source>
    </source>
</evidence>
<evidence type="ECO:0000312" key="7">
    <source>
        <dbReference type="EMBL" id="ABN52504.1"/>
    </source>
</evidence>
<comment type="function">
    <text evidence="2 6">Sigma factors are initiation factors that promote the attachment of RNA polymerase to specific initiation sites and are then released (By similarity). This sigma factor is involved in regulation of cellulosomal genes via an external polysaccharide-sensing mechanism (Probable).</text>
</comment>
<comment type="activity regulation">
    <text evidence="1 2">Negatively regulated by the anti-sigma-I factor RsgI5 (By similarity). Binding of the polysaccharide substrate to RsgI5 may lead to the release and activation of SigI5 (By similarity).</text>
</comment>
<comment type="subunit">
    <text evidence="2">Interacts with RsgI5.</text>
</comment>
<comment type="subcellular location">
    <subcellularLocation>
        <location evidence="2">Cytoplasm</location>
    </subcellularLocation>
</comment>
<comment type="induction">
    <text evidence="3">Up-regulated in the presence of xylan.</text>
</comment>
<comment type="similarity">
    <text evidence="2">Belongs to the sigma-70 factor family. SigI subfamily.</text>
</comment>
<keyword id="KW-0963">Cytoplasm</keyword>
<keyword id="KW-0238">DNA-binding</keyword>
<keyword id="KW-1185">Reference proteome</keyword>
<keyword id="KW-0731">Sigma factor</keyword>
<keyword id="KW-0804">Transcription</keyword>
<keyword id="KW-0805">Transcription regulation</keyword>
<organism>
    <name type="scientific">Acetivibrio thermocellus (strain ATCC 27405 / DSM 1237 / JCM 9322 / NBRC 103400 / NCIMB 10682 / NRRL B-4536 / VPI 7372)</name>
    <name type="common">Clostridium thermocellum</name>
    <dbReference type="NCBI Taxonomy" id="203119"/>
    <lineage>
        <taxon>Bacteria</taxon>
        <taxon>Bacillati</taxon>
        <taxon>Bacillota</taxon>
        <taxon>Clostridia</taxon>
        <taxon>Eubacteriales</taxon>
        <taxon>Oscillospiraceae</taxon>
        <taxon>Acetivibrio</taxon>
    </lineage>
</organism>
<dbReference type="EMBL" id="CP000568">
    <property type="protein sequence ID" value="ABN52504.1"/>
    <property type="molecule type" value="Genomic_DNA"/>
</dbReference>
<dbReference type="RefSeq" id="WP_003517500.1">
    <property type="nucleotide sequence ID" value="NC_009012.1"/>
</dbReference>
<dbReference type="SMR" id="A3DEX5"/>
<dbReference type="STRING" id="203119.Cthe_1272"/>
<dbReference type="GeneID" id="35805823"/>
<dbReference type="KEGG" id="cth:Cthe_1272"/>
<dbReference type="eggNOG" id="COG1191">
    <property type="taxonomic scope" value="Bacteria"/>
</dbReference>
<dbReference type="HOGENOM" id="CLU_082361_0_0_9"/>
<dbReference type="OrthoDB" id="3190733at2"/>
<dbReference type="Proteomes" id="UP000002145">
    <property type="component" value="Chromosome"/>
</dbReference>
<dbReference type="GO" id="GO:0005737">
    <property type="term" value="C:cytoplasm"/>
    <property type="evidence" value="ECO:0007669"/>
    <property type="project" value="UniProtKB-SubCell"/>
</dbReference>
<dbReference type="GO" id="GO:0003677">
    <property type="term" value="F:DNA binding"/>
    <property type="evidence" value="ECO:0007669"/>
    <property type="project" value="UniProtKB-UniRule"/>
</dbReference>
<dbReference type="GO" id="GO:0016987">
    <property type="term" value="F:sigma factor activity"/>
    <property type="evidence" value="ECO:0007669"/>
    <property type="project" value="UniProtKB-UniRule"/>
</dbReference>
<dbReference type="GO" id="GO:0006352">
    <property type="term" value="P:DNA-templated transcription initiation"/>
    <property type="evidence" value="ECO:0007669"/>
    <property type="project" value="UniProtKB-UniRule"/>
</dbReference>
<dbReference type="Gene3D" id="1.10.1740.10">
    <property type="match status" value="1"/>
</dbReference>
<dbReference type="HAMAP" id="MF_02064">
    <property type="entry name" value="Sigma70_SigI"/>
    <property type="match status" value="1"/>
</dbReference>
<dbReference type="InterPro" id="IPR014244">
    <property type="entry name" value="RNA_pol_sigma-I"/>
</dbReference>
<dbReference type="InterPro" id="IPR007627">
    <property type="entry name" value="RNA_pol_sigma70_r2"/>
</dbReference>
<dbReference type="InterPro" id="IPR013325">
    <property type="entry name" value="RNA_pol_sigma_r2"/>
</dbReference>
<dbReference type="NCBIfam" id="NF006173">
    <property type="entry name" value="PRK08311.2-1"/>
    <property type="match status" value="1"/>
</dbReference>
<dbReference type="Pfam" id="PF04542">
    <property type="entry name" value="Sigma70_r2"/>
    <property type="match status" value="1"/>
</dbReference>
<dbReference type="PIRSF" id="PIRSF038953">
    <property type="entry name" value="SigI"/>
    <property type="match status" value="1"/>
</dbReference>
<dbReference type="SUPFAM" id="SSF88946">
    <property type="entry name" value="Sigma2 domain of RNA polymerase sigma factors"/>
    <property type="match status" value="1"/>
</dbReference>
<sequence>MLFVSAIIDYAGETATHIVEKIKNGDKHLKEKFIKDYIPFILNIVSSFYSSKTGDLKSSDEYSIGLMAFNEAIEKFDVNKSKSFLKFAEMVIKKRMIDYFRKTSSIGRKEIPFSYFNSNNETEFRKKINNLDIEEEFNSYEFICELRDFSKKLESFGLSINNLPDYMPKHKDSREMCINIAKKIVENKSIFDKLKTKKYIQMKELSKIIDVHPKTVERNRAFIICLCILFDNDYGNFKSYLNKIF</sequence>
<gene>
    <name evidence="4" type="primary">sigI5</name>
    <name evidence="7" type="ordered locus">Cthe_1272</name>
</gene>